<protein>
    <recommendedName>
        <fullName evidence="1">Isoleucine--tRNA ligase</fullName>
        <ecNumber evidence="1">6.1.1.5</ecNumber>
    </recommendedName>
    <alternativeName>
        <fullName evidence="1">Isoleucyl-tRNA synthetase</fullName>
        <shortName evidence="1">IleRS</shortName>
    </alternativeName>
</protein>
<accession>B2S348</accession>
<sequence length="1091" mass="124242">MYTPVDPKVDFVAQERRILAFWRERRVFEQSVAQRAQGKSYVFFDGPPFATGLPHFGHFVPSTIKDIIPRYQTMRGAYVPRRFGWDCHGLPIEHLIEQELNLNSKSDVESYGVSAFNAACRSSVLRYVKEWQRTLTRLGRWVDFDNDYKTMDVCYMESVWWVVAQLWQRKLLYEGYKILPYCPRCATALSNHELNLGGYQDVSDPAITVRFECTSVVPGSPAAREFCAAASWGSASLPAHTCFLAWTTTPWTLPCNAALALGPQILYVLIEANDEHYILARSRLEFYYPDSSAYRVVWEKRGEHLAGIRYRPLFSYPVFGQGPDPSVQGDSEEGLFCTRVADFVSTEDGTGVVHVAPAFGEDDYEVFKDAGISIQCPLDAECRFTAEVADYQGLFVKAADKAIIARVQKQGALFRREQISHAYPHCWRCASPLIYRAVHSWFVAVEKIKDKMLAANASICWQPSHIRDGRFGKWLVCARDWAISRDRYWGNPLPIWRCVHCGATDCIGSRTQLYERSGMLLEDLHKHVVDMVTIPCACGSVMRRVPEVLDCWFESGAMPYAQQHYPFEHATDFERYFPAHFISEGLDQTRGWFYTLTILAVALFERPAFENCIVTGLVLASDGKKMSKALRNYADPNEVMDRYGADALRLFLVRSAVVRADDLKYSDEGVKDILKTVIIPLWNSYSFYVTYANIDGIDPPVCAKVDGMGQAVTRLATHLNNPLDRWILSLTEKLVQDIACALDAYDVSKVADPIVSYVDQLNNWYIRRSRRRFWKSINDEDKRCAYNTLYCVLKRCVLAIAPVVPFITESIWQNIRAADDVQSVHLADYPVCTPMVRDDALEFKMETVQRVVSMARAIRAQCNLKVRQPLKAMQVITRNPMERSALLEMEEDVLDELNVKELVFHEKEDEIVEYRAKANFRVLGKELGSKTKRAALSIERLSSAEIQEILEGTTLYLDVDGDRLELTEEKILVQRIERESLKAINEGTLTVALDTTLTEDLLLEGAIRDLVRGVQNLRKERGFSLVDRICLRVFSSDQDIVCARKAYDLHRSYIVGETLAAHVQWARVRDGASAVYVKSDAVLWEVSIDKA</sequence>
<comment type="function">
    <text evidence="1">Catalyzes the attachment of isoleucine to tRNA(Ile). As IleRS can inadvertently accommodate and process structurally similar amino acids such as valine, to avoid such errors it has two additional distinct tRNA(Ile)-dependent editing activities. One activity is designated as 'pretransfer' editing and involves the hydrolysis of activated Val-AMP. The other activity is designated 'posttransfer' editing and involves deacylation of mischarged Val-tRNA(Ile).</text>
</comment>
<comment type="catalytic activity">
    <reaction evidence="1">
        <text>tRNA(Ile) + L-isoleucine + ATP = L-isoleucyl-tRNA(Ile) + AMP + diphosphate</text>
        <dbReference type="Rhea" id="RHEA:11060"/>
        <dbReference type="Rhea" id="RHEA-COMP:9666"/>
        <dbReference type="Rhea" id="RHEA-COMP:9695"/>
        <dbReference type="ChEBI" id="CHEBI:30616"/>
        <dbReference type="ChEBI" id="CHEBI:33019"/>
        <dbReference type="ChEBI" id="CHEBI:58045"/>
        <dbReference type="ChEBI" id="CHEBI:78442"/>
        <dbReference type="ChEBI" id="CHEBI:78528"/>
        <dbReference type="ChEBI" id="CHEBI:456215"/>
        <dbReference type="EC" id="6.1.1.5"/>
    </reaction>
</comment>
<comment type="cofactor">
    <cofactor evidence="1">
        <name>Zn(2+)</name>
        <dbReference type="ChEBI" id="CHEBI:29105"/>
    </cofactor>
</comment>
<comment type="subunit">
    <text evidence="1">Monomer.</text>
</comment>
<comment type="subcellular location">
    <subcellularLocation>
        <location evidence="1">Cytoplasm</location>
    </subcellularLocation>
</comment>
<comment type="domain">
    <text evidence="1">IleRS has two distinct active sites: one for aminoacylation and one for editing. The misactivated valine is translocated from the active site to the editing site, which sterically excludes the correctly activated isoleucine. The single editing site contains two valyl binding pockets, one specific for each substrate (Val-AMP or Val-tRNA(Ile)).</text>
</comment>
<comment type="similarity">
    <text evidence="1">Belongs to the class-I aminoacyl-tRNA synthetase family. IleS type 2 subfamily.</text>
</comment>
<gene>
    <name evidence="1" type="primary">ileS</name>
    <name type="ordered locus">TPASS_0452</name>
</gene>
<reference key="1">
    <citation type="journal article" date="2008" name="BMC Microbiol.">
        <title>Complete genome sequence of Treponema pallidum ssp. pallidum strain SS14 determined with oligonucleotide arrays.</title>
        <authorList>
            <person name="Matejkova P."/>
            <person name="Strouhal M."/>
            <person name="Smajs D."/>
            <person name="Norris S.J."/>
            <person name="Palzkill T."/>
            <person name="Petrosino J.F."/>
            <person name="Sodergren E."/>
            <person name="Norton J.E."/>
            <person name="Singh J."/>
            <person name="Richmond T.A."/>
            <person name="Molla M.N."/>
            <person name="Albert T.J."/>
            <person name="Weinstock G.M."/>
        </authorList>
    </citation>
    <scope>NUCLEOTIDE SEQUENCE [LARGE SCALE GENOMIC DNA]</scope>
    <source>
        <strain>SS14</strain>
    </source>
</reference>
<proteinExistence type="inferred from homology"/>
<keyword id="KW-0030">Aminoacyl-tRNA synthetase</keyword>
<keyword id="KW-0067">ATP-binding</keyword>
<keyword id="KW-0963">Cytoplasm</keyword>
<keyword id="KW-0436">Ligase</keyword>
<keyword id="KW-0479">Metal-binding</keyword>
<keyword id="KW-0547">Nucleotide-binding</keyword>
<keyword id="KW-0648">Protein biosynthesis</keyword>
<keyword id="KW-0862">Zinc</keyword>
<name>SYI_TREPS</name>
<dbReference type="EC" id="6.1.1.5" evidence="1"/>
<dbReference type="EMBL" id="CP000805">
    <property type="protein sequence ID" value="ACD70877.1"/>
    <property type="molecule type" value="Genomic_DNA"/>
</dbReference>
<dbReference type="RefSeq" id="WP_010881901.1">
    <property type="nucleotide sequence ID" value="NC_021508.1"/>
</dbReference>
<dbReference type="SMR" id="B2S348"/>
<dbReference type="GeneID" id="93876221"/>
<dbReference type="KEGG" id="tpp:TPASS_0452"/>
<dbReference type="PATRIC" id="fig|455434.6.peg.453"/>
<dbReference type="Proteomes" id="UP000001202">
    <property type="component" value="Chromosome"/>
</dbReference>
<dbReference type="GO" id="GO:0005737">
    <property type="term" value="C:cytoplasm"/>
    <property type="evidence" value="ECO:0007669"/>
    <property type="project" value="UniProtKB-SubCell"/>
</dbReference>
<dbReference type="GO" id="GO:0002161">
    <property type="term" value="F:aminoacyl-tRNA deacylase activity"/>
    <property type="evidence" value="ECO:0007669"/>
    <property type="project" value="InterPro"/>
</dbReference>
<dbReference type="GO" id="GO:0005524">
    <property type="term" value="F:ATP binding"/>
    <property type="evidence" value="ECO:0007669"/>
    <property type="project" value="UniProtKB-UniRule"/>
</dbReference>
<dbReference type="GO" id="GO:0004822">
    <property type="term" value="F:isoleucine-tRNA ligase activity"/>
    <property type="evidence" value="ECO:0007669"/>
    <property type="project" value="UniProtKB-UniRule"/>
</dbReference>
<dbReference type="GO" id="GO:0000049">
    <property type="term" value="F:tRNA binding"/>
    <property type="evidence" value="ECO:0007669"/>
    <property type="project" value="InterPro"/>
</dbReference>
<dbReference type="GO" id="GO:0008270">
    <property type="term" value="F:zinc ion binding"/>
    <property type="evidence" value="ECO:0007669"/>
    <property type="project" value="UniProtKB-UniRule"/>
</dbReference>
<dbReference type="GO" id="GO:0006428">
    <property type="term" value="P:isoleucyl-tRNA aminoacylation"/>
    <property type="evidence" value="ECO:0007669"/>
    <property type="project" value="UniProtKB-UniRule"/>
</dbReference>
<dbReference type="CDD" id="cd07961">
    <property type="entry name" value="Anticodon_Ia_Ile_ABEc"/>
    <property type="match status" value="1"/>
</dbReference>
<dbReference type="CDD" id="cd00818">
    <property type="entry name" value="IleRS_core"/>
    <property type="match status" value="1"/>
</dbReference>
<dbReference type="FunFam" id="3.40.50.620:FF:000063">
    <property type="entry name" value="Isoleucine--tRNA ligase"/>
    <property type="match status" value="1"/>
</dbReference>
<dbReference type="FunFam" id="3.40.50.620:FF:000075">
    <property type="entry name" value="Isoleucine--tRNA ligase"/>
    <property type="match status" value="1"/>
</dbReference>
<dbReference type="Gene3D" id="3.40.50.620">
    <property type="entry name" value="HUPs"/>
    <property type="match status" value="2"/>
</dbReference>
<dbReference type="Gene3D" id="1.10.730.10">
    <property type="entry name" value="Isoleucyl-tRNA Synthetase, Domain 1"/>
    <property type="match status" value="1"/>
</dbReference>
<dbReference type="HAMAP" id="MF_02003">
    <property type="entry name" value="Ile_tRNA_synth_type2"/>
    <property type="match status" value="1"/>
</dbReference>
<dbReference type="InterPro" id="IPR002300">
    <property type="entry name" value="aa-tRNA-synth_Ia"/>
</dbReference>
<dbReference type="InterPro" id="IPR033709">
    <property type="entry name" value="Anticodon_Ile_ABEc"/>
</dbReference>
<dbReference type="InterPro" id="IPR002301">
    <property type="entry name" value="Ile-tRNA-ligase"/>
</dbReference>
<dbReference type="InterPro" id="IPR023586">
    <property type="entry name" value="Ile-tRNA-ligase_type2"/>
</dbReference>
<dbReference type="InterPro" id="IPR013155">
    <property type="entry name" value="M/V/L/I-tRNA-synth_anticd-bd"/>
</dbReference>
<dbReference type="InterPro" id="IPR014729">
    <property type="entry name" value="Rossmann-like_a/b/a_fold"/>
</dbReference>
<dbReference type="InterPro" id="IPR009080">
    <property type="entry name" value="tRNAsynth_Ia_anticodon-bd"/>
</dbReference>
<dbReference type="InterPro" id="IPR009008">
    <property type="entry name" value="Val/Leu/Ile-tRNA-synth_edit"/>
</dbReference>
<dbReference type="NCBIfam" id="TIGR00392">
    <property type="entry name" value="ileS"/>
    <property type="match status" value="1"/>
</dbReference>
<dbReference type="PANTHER" id="PTHR42780:SF1">
    <property type="entry name" value="ISOLEUCINE--TRNA LIGASE, CYTOPLASMIC"/>
    <property type="match status" value="1"/>
</dbReference>
<dbReference type="PANTHER" id="PTHR42780">
    <property type="entry name" value="SOLEUCYL-TRNA SYNTHETASE"/>
    <property type="match status" value="1"/>
</dbReference>
<dbReference type="Pfam" id="PF08264">
    <property type="entry name" value="Anticodon_1"/>
    <property type="match status" value="1"/>
</dbReference>
<dbReference type="Pfam" id="PF19302">
    <property type="entry name" value="DUF5915"/>
    <property type="match status" value="1"/>
</dbReference>
<dbReference type="Pfam" id="PF00133">
    <property type="entry name" value="tRNA-synt_1"/>
    <property type="match status" value="1"/>
</dbReference>
<dbReference type="PRINTS" id="PR00984">
    <property type="entry name" value="TRNASYNTHILE"/>
</dbReference>
<dbReference type="SUPFAM" id="SSF47323">
    <property type="entry name" value="Anticodon-binding domain of a subclass of class I aminoacyl-tRNA synthetases"/>
    <property type="match status" value="1"/>
</dbReference>
<dbReference type="SUPFAM" id="SSF52374">
    <property type="entry name" value="Nucleotidylyl transferase"/>
    <property type="match status" value="1"/>
</dbReference>
<dbReference type="SUPFAM" id="SSF50677">
    <property type="entry name" value="ValRS/IleRS/LeuRS editing domain"/>
    <property type="match status" value="1"/>
</dbReference>
<evidence type="ECO:0000255" key="1">
    <source>
        <dbReference type="HAMAP-Rule" id="MF_02003"/>
    </source>
</evidence>
<feature type="chain" id="PRO_1000216260" description="Isoleucine--tRNA ligase">
    <location>
        <begin position="1"/>
        <end position="1091"/>
    </location>
</feature>
<feature type="short sequence motif" description="'HIGH' region">
    <location>
        <begin position="48"/>
        <end position="58"/>
    </location>
</feature>
<feature type="short sequence motif" description="'KMSKS' region">
    <location>
        <begin position="625"/>
        <end position="629"/>
    </location>
</feature>
<feature type="binding site" evidence="1">
    <location>
        <position position="628"/>
    </location>
    <ligand>
        <name>ATP</name>
        <dbReference type="ChEBI" id="CHEBI:30616"/>
    </ligand>
</feature>
<organism>
    <name type="scientific">Treponema pallidum subsp. pallidum (strain SS14)</name>
    <dbReference type="NCBI Taxonomy" id="455434"/>
    <lineage>
        <taxon>Bacteria</taxon>
        <taxon>Pseudomonadati</taxon>
        <taxon>Spirochaetota</taxon>
        <taxon>Spirochaetia</taxon>
        <taxon>Spirochaetales</taxon>
        <taxon>Treponemataceae</taxon>
        <taxon>Treponema</taxon>
    </lineage>
</organism>